<organism>
    <name type="scientific">Paraburkholderia xenovorans (strain LB400)</name>
    <dbReference type="NCBI Taxonomy" id="266265"/>
    <lineage>
        <taxon>Bacteria</taxon>
        <taxon>Pseudomonadati</taxon>
        <taxon>Pseudomonadota</taxon>
        <taxon>Betaproteobacteria</taxon>
        <taxon>Burkholderiales</taxon>
        <taxon>Burkholderiaceae</taxon>
        <taxon>Paraburkholderia</taxon>
    </lineage>
</organism>
<proteinExistence type="inferred from homology"/>
<dbReference type="EC" id="2.7.2.11" evidence="1"/>
<dbReference type="EMBL" id="CP000270">
    <property type="protein sequence ID" value="ABE32423.1"/>
    <property type="molecule type" value="Genomic_DNA"/>
</dbReference>
<dbReference type="RefSeq" id="WP_011489897.1">
    <property type="nucleotide sequence ID" value="NC_007951.1"/>
</dbReference>
<dbReference type="SMR" id="Q13U16"/>
<dbReference type="STRING" id="266265.Bxe_A0510"/>
<dbReference type="KEGG" id="bxb:DR64_2687"/>
<dbReference type="KEGG" id="bxe:Bxe_A0510"/>
<dbReference type="PATRIC" id="fig|266265.5.peg.4105"/>
<dbReference type="eggNOG" id="COG0263">
    <property type="taxonomic scope" value="Bacteria"/>
</dbReference>
<dbReference type="OrthoDB" id="9804434at2"/>
<dbReference type="UniPathway" id="UPA00098">
    <property type="reaction ID" value="UER00359"/>
</dbReference>
<dbReference type="Proteomes" id="UP000001817">
    <property type="component" value="Chromosome 1"/>
</dbReference>
<dbReference type="GO" id="GO:0005829">
    <property type="term" value="C:cytosol"/>
    <property type="evidence" value="ECO:0007669"/>
    <property type="project" value="TreeGrafter"/>
</dbReference>
<dbReference type="GO" id="GO:0005524">
    <property type="term" value="F:ATP binding"/>
    <property type="evidence" value="ECO:0007669"/>
    <property type="project" value="UniProtKB-KW"/>
</dbReference>
<dbReference type="GO" id="GO:0004349">
    <property type="term" value="F:glutamate 5-kinase activity"/>
    <property type="evidence" value="ECO:0007669"/>
    <property type="project" value="UniProtKB-UniRule"/>
</dbReference>
<dbReference type="GO" id="GO:0003723">
    <property type="term" value="F:RNA binding"/>
    <property type="evidence" value="ECO:0007669"/>
    <property type="project" value="InterPro"/>
</dbReference>
<dbReference type="GO" id="GO:0055129">
    <property type="term" value="P:L-proline biosynthetic process"/>
    <property type="evidence" value="ECO:0007669"/>
    <property type="project" value="UniProtKB-UniRule"/>
</dbReference>
<dbReference type="CDD" id="cd04242">
    <property type="entry name" value="AAK_G5K_ProB"/>
    <property type="match status" value="1"/>
</dbReference>
<dbReference type="CDD" id="cd21157">
    <property type="entry name" value="PUA_G5K"/>
    <property type="match status" value="1"/>
</dbReference>
<dbReference type="FunFam" id="2.30.130.10:FF:000007">
    <property type="entry name" value="Glutamate 5-kinase"/>
    <property type="match status" value="1"/>
</dbReference>
<dbReference type="FunFam" id="3.40.1160.10:FF:000018">
    <property type="entry name" value="Glutamate 5-kinase"/>
    <property type="match status" value="1"/>
</dbReference>
<dbReference type="Gene3D" id="3.40.1160.10">
    <property type="entry name" value="Acetylglutamate kinase-like"/>
    <property type="match status" value="1"/>
</dbReference>
<dbReference type="Gene3D" id="2.30.130.10">
    <property type="entry name" value="PUA domain"/>
    <property type="match status" value="1"/>
</dbReference>
<dbReference type="HAMAP" id="MF_00456">
    <property type="entry name" value="ProB"/>
    <property type="match status" value="1"/>
</dbReference>
<dbReference type="InterPro" id="IPR036393">
    <property type="entry name" value="AceGlu_kinase-like_sf"/>
</dbReference>
<dbReference type="InterPro" id="IPR001048">
    <property type="entry name" value="Asp/Glu/Uridylate_kinase"/>
</dbReference>
<dbReference type="InterPro" id="IPR041739">
    <property type="entry name" value="G5K_ProB"/>
</dbReference>
<dbReference type="InterPro" id="IPR001057">
    <property type="entry name" value="Glu/AcGlu_kinase"/>
</dbReference>
<dbReference type="InterPro" id="IPR011529">
    <property type="entry name" value="Glu_5kinase"/>
</dbReference>
<dbReference type="InterPro" id="IPR005715">
    <property type="entry name" value="Glu_5kinase/COase_Synthase"/>
</dbReference>
<dbReference type="InterPro" id="IPR019797">
    <property type="entry name" value="Glutamate_5-kinase_CS"/>
</dbReference>
<dbReference type="InterPro" id="IPR002478">
    <property type="entry name" value="PUA"/>
</dbReference>
<dbReference type="InterPro" id="IPR015947">
    <property type="entry name" value="PUA-like_sf"/>
</dbReference>
<dbReference type="InterPro" id="IPR036974">
    <property type="entry name" value="PUA_sf"/>
</dbReference>
<dbReference type="NCBIfam" id="TIGR01027">
    <property type="entry name" value="proB"/>
    <property type="match status" value="1"/>
</dbReference>
<dbReference type="PANTHER" id="PTHR43654">
    <property type="entry name" value="GLUTAMATE 5-KINASE"/>
    <property type="match status" value="1"/>
</dbReference>
<dbReference type="PANTHER" id="PTHR43654:SF1">
    <property type="entry name" value="ISOPENTENYL PHOSPHATE KINASE"/>
    <property type="match status" value="1"/>
</dbReference>
<dbReference type="Pfam" id="PF00696">
    <property type="entry name" value="AA_kinase"/>
    <property type="match status" value="1"/>
</dbReference>
<dbReference type="Pfam" id="PF01472">
    <property type="entry name" value="PUA"/>
    <property type="match status" value="1"/>
</dbReference>
<dbReference type="PIRSF" id="PIRSF000729">
    <property type="entry name" value="GK"/>
    <property type="match status" value="1"/>
</dbReference>
<dbReference type="PRINTS" id="PR00474">
    <property type="entry name" value="GLU5KINASE"/>
</dbReference>
<dbReference type="SMART" id="SM00359">
    <property type="entry name" value="PUA"/>
    <property type="match status" value="1"/>
</dbReference>
<dbReference type="SUPFAM" id="SSF53633">
    <property type="entry name" value="Carbamate kinase-like"/>
    <property type="match status" value="1"/>
</dbReference>
<dbReference type="SUPFAM" id="SSF88697">
    <property type="entry name" value="PUA domain-like"/>
    <property type="match status" value="1"/>
</dbReference>
<dbReference type="PROSITE" id="PS00902">
    <property type="entry name" value="GLUTAMATE_5_KINASE"/>
    <property type="match status" value="1"/>
</dbReference>
<dbReference type="PROSITE" id="PS50890">
    <property type="entry name" value="PUA"/>
    <property type="match status" value="1"/>
</dbReference>
<accession>Q13U16</accession>
<keyword id="KW-0028">Amino-acid biosynthesis</keyword>
<keyword id="KW-0067">ATP-binding</keyword>
<keyword id="KW-0963">Cytoplasm</keyword>
<keyword id="KW-0418">Kinase</keyword>
<keyword id="KW-0547">Nucleotide-binding</keyword>
<keyword id="KW-0641">Proline biosynthesis</keyword>
<keyword id="KW-1185">Reference proteome</keyword>
<keyword id="KW-0808">Transferase</keyword>
<reference key="1">
    <citation type="journal article" date="2006" name="Proc. Natl. Acad. Sci. U.S.A.">
        <title>Burkholderia xenovorans LB400 harbors a multi-replicon, 9.73-Mbp genome shaped for versatility.</title>
        <authorList>
            <person name="Chain P.S.G."/>
            <person name="Denef V.J."/>
            <person name="Konstantinidis K.T."/>
            <person name="Vergez L.M."/>
            <person name="Agullo L."/>
            <person name="Reyes V.L."/>
            <person name="Hauser L."/>
            <person name="Cordova M."/>
            <person name="Gomez L."/>
            <person name="Gonzalez M."/>
            <person name="Land M."/>
            <person name="Lao V."/>
            <person name="Larimer F."/>
            <person name="LiPuma J.J."/>
            <person name="Mahenthiralingam E."/>
            <person name="Malfatti S.A."/>
            <person name="Marx C.J."/>
            <person name="Parnell J.J."/>
            <person name="Ramette A."/>
            <person name="Richardson P."/>
            <person name="Seeger M."/>
            <person name="Smith D."/>
            <person name="Spilker T."/>
            <person name="Sul W.J."/>
            <person name="Tsoi T.V."/>
            <person name="Ulrich L.E."/>
            <person name="Zhulin I.B."/>
            <person name="Tiedje J.M."/>
        </authorList>
    </citation>
    <scope>NUCLEOTIDE SEQUENCE [LARGE SCALE GENOMIC DNA]</scope>
    <source>
        <strain>LB400</strain>
    </source>
</reference>
<name>PROB_PARXL</name>
<evidence type="ECO:0000255" key="1">
    <source>
        <dbReference type="HAMAP-Rule" id="MF_00456"/>
    </source>
</evidence>
<protein>
    <recommendedName>
        <fullName evidence="1">Glutamate 5-kinase</fullName>
        <ecNumber evidence="1">2.7.2.11</ecNumber>
    </recommendedName>
    <alternativeName>
        <fullName evidence="1">Gamma-glutamyl kinase</fullName>
        <shortName evidence="1">GK</shortName>
    </alternativeName>
</protein>
<gene>
    <name evidence="1" type="primary">proB</name>
    <name type="ordered locus">Bxeno_A3885</name>
    <name type="ORF">Bxe_A0510</name>
</gene>
<sequence>MRSVIADSRRLVVKVGSSLVTNDGRGLDHAAIGRWAGQIAALRAQGKEVVLVSSGAIAEGMQRLGWTRRPREIDELQAAAAVGQMGLAQVYESRFAEHSIQTAQILLTHADLADRERYLNARSTLLTLLRLGVVPIINENDTVVTDEIKFGDNDTLGALVANLIEGDALVILTDQQGLFTADPRKDPAATLVQQADAGAPELEAMAGGAGSSLGRGGMLTKILAAKRAAHSGANTVIASGREVDVLSRLASGEAIGTQLIARTARMAARKQWMADHLQVRGHVVIDDGAVEKLTEGGKSLLPIGIVGVQGAFARGEVIACLSAAGREVARGLTNYSSAETKLIQRRPSGEIESVLGYMLEPELIHRDNLVLV</sequence>
<comment type="function">
    <text evidence="1">Catalyzes the transfer of a phosphate group to glutamate to form L-glutamate 5-phosphate.</text>
</comment>
<comment type="catalytic activity">
    <reaction evidence="1">
        <text>L-glutamate + ATP = L-glutamyl 5-phosphate + ADP</text>
        <dbReference type="Rhea" id="RHEA:14877"/>
        <dbReference type="ChEBI" id="CHEBI:29985"/>
        <dbReference type="ChEBI" id="CHEBI:30616"/>
        <dbReference type="ChEBI" id="CHEBI:58274"/>
        <dbReference type="ChEBI" id="CHEBI:456216"/>
        <dbReference type="EC" id="2.7.2.11"/>
    </reaction>
</comment>
<comment type="pathway">
    <text evidence="1">Amino-acid biosynthesis; L-proline biosynthesis; L-glutamate 5-semialdehyde from L-glutamate: step 1/2.</text>
</comment>
<comment type="subcellular location">
    <subcellularLocation>
        <location evidence="1">Cytoplasm</location>
    </subcellularLocation>
</comment>
<comment type="similarity">
    <text evidence="1">Belongs to the glutamate 5-kinase family.</text>
</comment>
<feature type="chain" id="PRO_0000252974" description="Glutamate 5-kinase">
    <location>
        <begin position="1"/>
        <end position="372"/>
    </location>
</feature>
<feature type="domain" description="PUA" evidence="1">
    <location>
        <begin position="280"/>
        <end position="358"/>
    </location>
</feature>
<feature type="binding site" evidence="1">
    <location>
        <position position="14"/>
    </location>
    <ligand>
        <name>ATP</name>
        <dbReference type="ChEBI" id="CHEBI:30616"/>
    </ligand>
</feature>
<feature type="binding site" evidence="1">
    <location>
        <position position="54"/>
    </location>
    <ligand>
        <name>substrate</name>
    </ligand>
</feature>
<feature type="binding site" evidence="1">
    <location>
        <position position="141"/>
    </location>
    <ligand>
        <name>substrate</name>
    </ligand>
</feature>
<feature type="binding site" evidence="1">
    <location>
        <position position="153"/>
    </location>
    <ligand>
        <name>substrate</name>
    </ligand>
</feature>
<feature type="binding site" evidence="1">
    <location>
        <begin position="173"/>
        <end position="174"/>
    </location>
    <ligand>
        <name>ATP</name>
        <dbReference type="ChEBI" id="CHEBI:30616"/>
    </ligand>
</feature>